<reference key="1">
    <citation type="submission" date="1995-01" db="EMBL/GenBank/DDBJ databases">
        <authorList>
            <person name="Russnak R."/>
        </authorList>
    </citation>
    <scope>NUCLEOTIDE SEQUENCE [GENOMIC DNA]</scope>
</reference>
<reference key="2">
    <citation type="journal article" date="1997" name="Nature">
        <title>The nucleotide sequence of Saccharomyces cerevisiae chromosome IV.</title>
        <authorList>
            <person name="Jacq C."/>
            <person name="Alt-Moerbe J."/>
            <person name="Andre B."/>
            <person name="Arnold W."/>
            <person name="Bahr A."/>
            <person name="Ballesta J.P.G."/>
            <person name="Bargues M."/>
            <person name="Baron L."/>
            <person name="Becker A."/>
            <person name="Biteau N."/>
            <person name="Bloecker H."/>
            <person name="Blugeon C."/>
            <person name="Boskovic J."/>
            <person name="Brandt P."/>
            <person name="Brueckner M."/>
            <person name="Buitrago M.J."/>
            <person name="Coster F."/>
            <person name="Delaveau T."/>
            <person name="del Rey F."/>
            <person name="Dujon B."/>
            <person name="Eide L.G."/>
            <person name="Garcia-Cantalejo J.M."/>
            <person name="Goffeau A."/>
            <person name="Gomez-Peris A."/>
            <person name="Granotier C."/>
            <person name="Hanemann V."/>
            <person name="Hankeln T."/>
            <person name="Hoheisel J.D."/>
            <person name="Jaeger W."/>
            <person name="Jimenez A."/>
            <person name="Jonniaux J.-L."/>
            <person name="Kraemer C."/>
            <person name="Kuester H."/>
            <person name="Laamanen P."/>
            <person name="Legros Y."/>
            <person name="Louis E.J."/>
            <person name="Moeller-Rieker S."/>
            <person name="Monnet A."/>
            <person name="Moro M."/>
            <person name="Mueller-Auer S."/>
            <person name="Nussbaumer B."/>
            <person name="Paricio N."/>
            <person name="Paulin L."/>
            <person name="Perea J."/>
            <person name="Perez-Alonso M."/>
            <person name="Perez-Ortin J.E."/>
            <person name="Pohl T.M."/>
            <person name="Prydz H."/>
            <person name="Purnelle B."/>
            <person name="Rasmussen S.W."/>
            <person name="Remacha M.A."/>
            <person name="Revuelta J.L."/>
            <person name="Rieger M."/>
            <person name="Salom D."/>
            <person name="Saluz H.P."/>
            <person name="Saiz J.E."/>
            <person name="Saren A.-M."/>
            <person name="Schaefer M."/>
            <person name="Scharfe M."/>
            <person name="Schmidt E.R."/>
            <person name="Schneider C."/>
            <person name="Scholler P."/>
            <person name="Schwarz S."/>
            <person name="Soler-Mira A."/>
            <person name="Urrestarazu L.A."/>
            <person name="Verhasselt P."/>
            <person name="Vissers S."/>
            <person name="Voet M."/>
            <person name="Volckaert G."/>
            <person name="Wagner G."/>
            <person name="Wambutt R."/>
            <person name="Wedler E."/>
            <person name="Wedler H."/>
            <person name="Woelfl S."/>
            <person name="Harris D.E."/>
            <person name="Bowman S."/>
            <person name="Brown D."/>
            <person name="Churcher C.M."/>
            <person name="Connor R."/>
            <person name="Dedman K."/>
            <person name="Gentles S."/>
            <person name="Hamlin N."/>
            <person name="Hunt S."/>
            <person name="Jones L."/>
            <person name="McDonald S."/>
            <person name="Murphy L.D."/>
            <person name="Niblett D."/>
            <person name="Odell C."/>
            <person name="Oliver K."/>
            <person name="Rajandream M.A."/>
            <person name="Richards C."/>
            <person name="Shore L."/>
            <person name="Walsh S.V."/>
            <person name="Barrell B.G."/>
            <person name="Dietrich F.S."/>
            <person name="Mulligan J.T."/>
            <person name="Allen E."/>
            <person name="Araujo R."/>
            <person name="Aviles E."/>
            <person name="Berno A."/>
            <person name="Carpenter J."/>
            <person name="Chen E."/>
            <person name="Cherry J.M."/>
            <person name="Chung E."/>
            <person name="Duncan M."/>
            <person name="Hunicke-Smith S."/>
            <person name="Hyman R.W."/>
            <person name="Komp C."/>
            <person name="Lashkari D."/>
            <person name="Lew H."/>
            <person name="Lin D."/>
            <person name="Mosedale D."/>
            <person name="Nakahara K."/>
            <person name="Namath A."/>
            <person name="Oefner P."/>
            <person name="Oh C."/>
            <person name="Petel F.X."/>
            <person name="Roberts D."/>
            <person name="Schramm S."/>
            <person name="Schroeder M."/>
            <person name="Shogren T."/>
            <person name="Shroff N."/>
            <person name="Winant A."/>
            <person name="Yelton M.A."/>
            <person name="Botstein D."/>
            <person name="Davis R.W."/>
            <person name="Johnston M."/>
            <person name="Andrews S."/>
            <person name="Brinkman R."/>
            <person name="Cooper J."/>
            <person name="Ding H."/>
            <person name="Du Z."/>
            <person name="Favello A."/>
            <person name="Fulton L."/>
            <person name="Gattung S."/>
            <person name="Greco T."/>
            <person name="Hallsworth K."/>
            <person name="Hawkins J."/>
            <person name="Hillier L.W."/>
            <person name="Jier M."/>
            <person name="Johnson D."/>
            <person name="Johnston L."/>
            <person name="Kirsten J."/>
            <person name="Kucaba T."/>
            <person name="Langston Y."/>
            <person name="Latreille P."/>
            <person name="Le T."/>
            <person name="Mardis E."/>
            <person name="Menezes S."/>
            <person name="Miller N."/>
            <person name="Nhan M."/>
            <person name="Pauley A."/>
            <person name="Peluso D."/>
            <person name="Rifkin L."/>
            <person name="Riles L."/>
            <person name="Taich A."/>
            <person name="Trevaskis E."/>
            <person name="Vignati D."/>
            <person name="Wilcox L."/>
            <person name="Wohldman P."/>
            <person name="Vaudin M."/>
            <person name="Wilson R."/>
            <person name="Waterston R."/>
            <person name="Albermann K."/>
            <person name="Hani J."/>
            <person name="Heumann K."/>
            <person name="Kleine K."/>
            <person name="Mewes H.-W."/>
            <person name="Zollner A."/>
            <person name="Zaccaria P."/>
        </authorList>
    </citation>
    <scope>NUCLEOTIDE SEQUENCE [LARGE SCALE GENOMIC DNA]</scope>
    <source>
        <strain>ATCC 204508 / S288c</strain>
    </source>
</reference>
<reference key="3">
    <citation type="journal article" date="2014" name="G3 (Bethesda)">
        <title>The reference genome sequence of Saccharomyces cerevisiae: Then and now.</title>
        <authorList>
            <person name="Engel S.R."/>
            <person name="Dietrich F.S."/>
            <person name="Fisk D.G."/>
            <person name="Binkley G."/>
            <person name="Balakrishnan R."/>
            <person name="Costanzo M.C."/>
            <person name="Dwight S.S."/>
            <person name="Hitz B.C."/>
            <person name="Karra K."/>
            <person name="Nash R.S."/>
            <person name="Weng S."/>
            <person name="Wong E.D."/>
            <person name="Lloyd P."/>
            <person name="Skrzypek M.S."/>
            <person name="Miyasato S.R."/>
            <person name="Simison M."/>
            <person name="Cherry J.M."/>
        </authorList>
    </citation>
    <scope>GENOME REANNOTATION</scope>
    <source>
        <strain>ATCC 204508 / S288c</strain>
    </source>
</reference>
<reference key="4">
    <citation type="journal article" date="1995" name="Mol. Cell. Biol.">
        <title>REF2 encodes an RNA-binding protein directly involved in yeast mRNA 3'-end formation.</title>
        <authorList>
            <person name="Russnak R."/>
            <person name="Nehrke K.W."/>
            <person name="Platt T."/>
        </authorList>
    </citation>
    <scope>PRELIMINARY NUCLEOTIDE SEQUENCE OF 1-429</scope>
    <scope>FUNCTION</scope>
</reference>
<reference key="5">
    <citation type="journal article" date="1996" name="Gene Expr.">
        <title>RNA binding analysis of yeast REF2 and its two-hybrid interaction with a new gene product, FIR1.</title>
        <authorList>
            <person name="Russnak R."/>
            <person name="Pereira S."/>
            <person name="Platt T."/>
        </authorList>
    </citation>
    <scope>FUNCTION</scope>
    <scope>INTERACTION WITH FIR1</scope>
</reference>
<reference key="6">
    <citation type="journal article" date="2003" name="EMBO J.">
        <title>Pti1p and Ref2p found in association with the mRNA 3' end formation complex direct snoRNA maturation.</title>
        <authorList>
            <person name="Dheur S."/>
            <person name="Vo le T.A."/>
            <person name="Voisinet-Hakil F."/>
            <person name="Minet M."/>
            <person name="Schmitter J.-M."/>
            <person name="Lacroute F."/>
            <person name="Wyers F."/>
            <person name="Minvielle-Sebastia L."/>
        </authorList>
    </citation>
    <scope>FUNCTION IN SNORNA 3-END FORMATION</scope>
</reference>
<reference key="7">
    <citation type="journal article" date="2003" name="J. Biol. Chem.">
        <title>Organization and function of APT, a subcomplex of the yeast cleavage and polyadenylation factor involved in the formation of mRNA and small nucleolar RNA 3'-ends.</title>
        <authorList>
            <person name="Nedea E."/>
            <person name="He X."/>
            <person name="Kim M."/>
            <person name="Pootoolal J."/>
            <person name="Zhong G."/>
            <person name="Canadien V."/>
            <person name="Hughes T."/>
            <person name="Buratowski S."/>
            <person name="Moore C.L."/>
            <person name="Greenblatt J."/>
        </authorList>
    </citation>
    <scope>IDENTIFICATION IN THE CPF COMPLEX</scope>
    <scope>COMPOSITION OF THE APT COMPLEX</scope>
    <scope>SUBCELLULAR LOCATION</scope>
    <scope>IDENTIFICATION BY MASS SPECTROMETRY</scope>
</reference>
<reference key="8">
    <citation type="journal article" date="2003" name="Nature">
        <title>Global analysis of protein expression in yeast.</title>
        <authorList>
            <person name="Ghaemmaghami S."/>
            <person name="Huh W.-K."/>
            <person name="Bower K."/>
            <person name="Howson R.W."/>
            <person name="Belle A."/>
            <person name="Dephoure N."/>
            <person name="O'Shea E.K."/>
            <person name="Weissman J.S."/>
        </authorList>
    </citation>
    <scope>LEVEL OF PROTEIN EXPRESSION [LARGE SCALE ANALYSIS]</scope>
</reference>
<reference key="9">
    <citation type="journal article" date="2004" name="Mol. Cell. Biol.">
        <title>Identification of factors regulating poly(A) tail synthesis and maturation.</title>
        <authorList>
            <person name="Mangus D.A."/>
            <person name="Smith M.M."/>
            <person name="McSweeney J.M."/>
            <person name="Jacobson A."/>
        </authorList>
    </citation>
    <scope>FUNCTION</scope>
</reference>
<reference key="10">
    <citation type="journal article" date="2007" name="J. Proteome Res.">
        <title>Large-scale phosphorylation analysis of alpha-factor-arrested Saccharomyces cerevisiae.</title>
        <authorList>
            <person name="Li X."/>
            <person name="Gerber S.A."/>
            <person name="Rudner A.D."/>
            <person name="Beausoleil S.A."/>
            <person name="Haas W."/>
            <person name="Villen J."/>
            <person name="Elias J.E."/>
            <person name="Gygi S.P."/>
        </authorList>
    </citation>
    <scope>IDENTIFICATION BY MASS SPECTROMETRY [LARGE SCALE ANALYSIS]</scope>
    <source>
        <strain>ADR376</strain>
    </source>
</reference>
<reference key="11">
    <citation type="journal article" date="2008" name="Mol. Cell. Proteomics">
        <title>A multidimensional chromatography technology for in-depth phosphoproteome analysis.</title>
        <authorList>
            <person name="Albuquerque C.P."/>
            <person name="Smolka M.B."/>
            <person name="Payne S.H."/>
            <person name="Bafna V."/>
            <person name="Eng J."/>
            <person name="Zhou H."/>
        </authorList>
    </citation>
    <scope>IDENTIFICATION BY MASS SPECTROMETRY [LARGE SCALE ANALYSIS]</scope>
</reference>
<keyword id="KW-0002">3D-structure</keyword>
<keyword id="KW-0507">mRNA processing</keyword>
<keyword id="KW-0539">Nucleus</keyword>
<keyword id="KW-1185">Reference proteome</keyword>
<keyword id="KW-0694">RNA-binding</keyword>
<name>REF2_YEAST</name>
<comment type="function">
    <text evidence="2 5 6 7">RNA-binding component of the cleavage and polyadenylation factor (CPF) complex, which plays a key role in polyadenylation-dependent pre-mRNA 3'-end formation and cooperates with cleavage factors including the CFIA complex and NAB4/CFIB. Negative regulator of poly(A) synthesis. Component of the APT complex, which may be involved in polyadenylation-independent transcript 3'-end formation. REF2 is required for 3'-end formation of snoRNAs.</text>
</comment>
<comment type="subunit">
    <text evidence="3 7">Interacts with FIR1. Component of the cleavage and polyadenylation factor (CPF) complex, which is composed of PTI1, SYC1, SSU72, GLC7, MPE1, REF2, PFS2, PTA1, YSH1/BRR5, SWD2, CFT2/YDH1, YTH1, CFT1/YHH1, FIP1 and PAP1. Component of the APT complex, which is a subcomplex of CPF, and is composed of PTI1, SYC1, SSU72, GLC7, REF2, PTA1 and SWD2.</text>
</comment>
<comment type="interaction">
    <interactant intactId="EBI-14915">
        <id>P42073</id>
    </interactant>
    <interactant intactId="EBI-13715">
        <id>P32598</id>
        <label>GLC7</label>
    </interactant>
    <organismsDiffer>false</organismsDiffer>
    <experiments>9</experiments>
</comment>
<comment type="subcellular location">
    <subcellularLocation>
        <location evidence="3">Nucleus</location>
    </subcellularLocation>
</comment>
<comment type="miscellaneous">
    <text evidence="4">Present with 7450 molecules/cell in log phase SD medium.</text>
</comment>
<accession>P42073</accession>
<accession>D6VSH8</accession>
<dbReference type="EMBL" id="U20261">
    <property type="protein sequence ID" value="AAA85866.1"/>
    <property type="molecule type" value="Genomic_DNA"/>
</dbReference>
<dbReference type="EMBL" id="Z48784">
    <property type="protein sequence ID" value="CAA88708.1"/>
    <property type="molecule type" value="Genomic_DNA"/>
</dbReference>
<dbReference type="EMBL" id="BK006938">
    <property type="protein sequence ID" value="DAA12038.1"/>
    <property type="molecule type" value="Genomic_DNA"/>
</dbReference>
<dbReference type="PIR" id="S52702">
    <property type="entry name" value="S52702"/>
</dbReference>
<dbReference type="RefSeq" id="NP_010481.3">
    <property type="nucleotide sequence ID" value="NM_001180503.3"/>
</dbReference>
<dbReference type="PDB" id="8A8F">
    <property type="method" value="X-ray"/>
    <property type="resolution" value="1.85 A"/>
    <property type="chains" value="B=348-406"/>
</dbReference>
<dbReference type="PDBsum" id="8A8F"/>
<dbReference type="SMR" id="P42073"/>
<dbReference type="BioGRID" id="32247">
    <property type="interactions" value="305"/>
</dbReference>
<dbReference type="ComplexPortal" id="CPX-1053">
    <property type="entry name" value="Cleavage and polyadenylation specificity factor complex"/>
</dbReference>
<dbReference type="DIP" id="DIP-871N"/>
<dbReference type="FunCoup" id="P42073">
    <property type="interactions" value="346"/>
</dbReference>
<dbReference type="IntAct" id="P42073">
    <property type="interactions" value="32"/>
</dbReference>
<dbReference type="MINT" id="P42073"/>
<dbReference type="STRING" id="4932.YDR195W"/>
<dbReference type="CarbonylDB" id="P42073"/>
<dbReference type="GlyGen" id="P42073">
    <property type="glycosylation" value="2 sites, 1 O-linked glycan (1 site)"/>
</dbReference>
<dbReference type="iPTMnet" id="P42073"/>
<dbReference type="PaxDb" id="4932-YDR195W"/>
<dbReference type="PeptideAtlas" id="P42073"/>
<dbReference type="EnsemblFungi" id="YDR195W_mRNA">
    <property type="protein sequence ID" value="YDR195W"/>
    <property type="gene ID" value="YDR195W"/>
</dbReference>
<dbReference type="GeneID" id="851776"/>
<dbReference type="KEGG" id="sce:YDR195W"/>
<dbReference type="AGR" id="SGD:S000002603"/>
<dbReference type="SGD" id="S000002603">
    <property type="gene designation" value="REF2"/>
</dbReference>
<dbReference type="VEuPathDB" id="FungiDB:YDR195W"/>
<dbReference type="eggNOG" id="ENOG502QR0S">
    <property type="taxonomic scope" value="Eukaryota"/>
</dbReference>
<dbReference type="HOGENOM" id="CLU_025953_0_0_1"/>
<dbReference type="InParanoid" id="P42073"/>
<dbReference type="OMA" id="AMPSSMI"/>
<dbReference type="OrthoDB" id="4070347at2759"/>
<dbReference type="BioCyc" id="YEAST:G3O-29782-MONOMER"/>
<dbReference type="BioGRID-ORCS" id="851776">
    <property type="hits" value="2 hits in 10 CRISPR screens"/>
</dbReference>
<dbReference type="PRO" id="PR:P42073"/>
<dbReference type="Proteomes" id="UP000002311">
    <property type="component" value="Chromosome IV"/>
</dbReference>
<dbReference type="RNAct" id="P42073">
    <property type="molecule type" value="protein"/>
</dbReference>
<dbReference type="GO" id="GO:0005829">
    <property type="term" value="C:cytosol"/>
    <property type="evidence" value="ECO:0000314"/>
    <property type="project" value="SGD"/>
</dbReference>
<dbReference type="GO" id="GO:0005847">
    <property type="term" value="C:mRNA cleavage and polyadenylation specificity factor complex"/>
    <property type="evidence" value="ECO:0000314"/>
    <property type="project" value="SGD"/>
</dbReference>
<dbReference type="GO" id="GO:0005634">
    <property type="term" value="C:nucleus"/>
    <property type="evidence" value="ECO:0000314"/>
    <property type="project" value="SGD"/>
</dbReference>
<dbReference type="GO" id="GO:0003682">
    <property type="term" value="F:chromatin binding"/>
    <property type="evidence" value="ECO:0000314"/>
    <property type="project" value="SGD"/>
</dbReference>
<dbReference type="GO" id="GO:0003723">
    <property type="term" value="F:RNA binding"/>
    <property type="evidence" value="ECO:0000314"/>
    <property type="project" value="SGD"/>
</dbReference>
<dbReference type="GO" id="GO:0031124">
    <property type="term" value="P:mRNA 3'-end processing"/>
    <property type="evidence" value="ECO:0000315"/>
    <property type="project" value="SGD"/>
</dbReference>
<dbReference type="GO" id="GO:1903501">
    <property type="term" value="P:positive regulation of mitotic actomyosin contractile ring assembly"/>
    <property type="evidence" value="ECO:0000315"/>
    <property type="project" value="SGD"/>
</dbReference>
<dbReference type="GO" id="GO:1901901">
    <property type="term" value="P:regulation of protein localization to cell division site involved in cytokinesis"/>
    <property type="evidence" value="ECO:0000315"/>
    <property type="project" value="SGD"/>
</dbReference>
<dbReference type="GO" id="GO:0031126">
    <property type="term" value="P:sno(s)RNA 3'-end processing"/>
    <property type="evidence" value="ECO:0000315"/>
    <property type="project" value="SGD"/>
</dbReference>
<dbReference type="GO" id="GO:0030846">
    <property type="term" value="P:termination of RNA polymerase II transcription, poly(A)-coupled"/>
    <property type="evidence" value="ECO:0000315"/>
    <property type="project" value="SGD"/>
</dbReference>
<protein>
    <recommendedName>
        <fullName>RNA end formation protein 2</fullName>
    </recommendedName>
</protein>
<sequence>MSAPVPQLVNISHALQASTIQQIRLDMVDFNKDCKLSSIQLARIDKYIDSLQAALNQFTKDNLHIERKEKNVTEADIQLYSGLKSMYLDYLNQLIKLKHEKQHHSTPPIANDVSLDFFVNQLPKFSPEERKNYIDNLILNKNSHNRLSKMDGLVDAVINLCVLDTSVAENVRSYMKLLDTLGFQKGSNSTGTKANLKKKLASSKAKIKDSEKEKEKEKDKSKVKMKTKLKPSPLLNNDDKNSSPSPTASTSSMKKLKSGLFNKNEAKSTESLPTSSKKKLSFSKYLNKDDADMTKLGTKRSIDVDFKVNPEASTVASNIISSSTSGSSTTTVATPASSEEPLKKKTKISVQDSNVQSILRNGKPKKARISSIKFLDDSQLIKVYGDDLPNQGLQVSPTQLKKILKPFKEGEPKEIILFEDMSIKLKPLDLMFLKNTNSDDYMDISETKGGPIHCETRTPLIYRKNFNHFNPDLNKRPPREPIEFDLNGNTNSTPTIAKAFGKNSLLLRKDRGGLPYKHVPIVKRNKYPPRPVH</sequence>
<feature type="chain" id="PRO_0000097239" description="RNA end formation protein 2">
    <location>
        <begin position="1"/>
        <end position="533"/>
    </location>
</feature>
<feature type="region of interest" description="Disordered" evidence="1">
    <location>
        <begin position="187"/>
        <end position="254"/>
    </location>
</feature>
<feature type="region of interest" description="Disordered" evidence="1">
    <location>
        <begin position="260"/>
        <end position="279"/>
    </location>
</feature>
<feature type="region of interest" description="Disordered" evidence="1">
    <location>
        <begin position="321"/>
        <end position="344"/>
    </location>
</feature>
<feature type="compositionally biased region" description="Basic and acidic residues" evidence="1">
    <location>
        <begin position="206"/>
        <end position="222"/>
    </location>
</feature>
<feature type="compositionally biased region" description="Low complexity" evidence="1">
    <location>
        <begin position="242"/>
        <end position="252"/>
    </location>
</feature>
<feature type="compositionally biased region" description="Low complexity" evidence="1">
    <location>
        <begin position="321"/>
        <end position="338"/>
    </location>
</feature>
<feature type="helix" evidence="8">
    <location>
        <begin position="377"/>
        <end position="379"/>
    </location>
</feature>
<feature type="strand" evidence="8">
    <location>
        <begin position="380"/>
        <end position="384"/>
    </location>
</feature>
<feature type="strand" evidence="8">
    <location>
        <begin position="386"/>
        <end position="388"/>
    </location>
</feature>
<feature type="strand" evidence="8">
    <location>
        <begin position="393"/>
        <end position="395"/>
    </location>
</feature>
<feature type="helix" evidence="8">
    <location>
        <begin position="397"/>
        <end position="404"/>
    </location>
</feature>
<organism>
    <name type="scientific">Saccharomyces cerevisiae (strain ATCC 204508 / S288c)</name>
    <name type="common">Baker's yeast</name>
    <dbReference type="NCBI Taxonomy" id="559292"/>
    <lineage>
        <taxon>Eukaryota</taxon>
        <taxon>Fungi</taxon>
        <taxon>Dikarya</taxon>
        <taxon>Ascomycota</taxon>
        <taxon>Saccharomycotina</taxon>
        <taxon>Saccharomycetes</taxon>
        <taxon>Saccharomycetales</taxon>
        <taxon>Saccharomycetaceae</taxon>
        <taxon>Saccharomyces</taxon>
    </lineage>
</organism>
<proteinExistence type="evidence at protein level"/>
<evidence type="ECO:0000256" key="1">
    <source>
        <dbReference type="SAM" id="MobiDB-lite"/>
    </source>
</evidence>
<evidence type="ECO:0000269" key="2">
    <source>
    </source>
</evidence>
<evidence type="ECO:0000269" key="3">
    <source>
    </source>
</evidence>
<evidence type="ECO:0000269" key="4">
    <source>
    </source>
</evidence>
<evidence type="ECO:0000269" key="5">
    <source>
    </source>
</evidence>
<evidence type="ECO:0000269" key="6">
    <source>
    </source>
</evidence>
<evidence type="ECO:0000269" key="7">
    <source>
    </source>
</evidence>
<evidence type="ECO:0007829" key="8">
    <source>
        <dbReference type="PDB" id="8A8F"/>
    </source>
</evidence>
<gene>
    <name type="primary">REF2</name>
    <name type="ordered locus">YDR195W</name>
    <name type="ORF">YD9346.06</name>
</gene>